<proteinExistence type="inferred from homology"/>
<evidence type="ECO:0000255" key="1">
    <source>
        <dbReference type="HAMAP-Rule" id="MF_00212"/>
    </source>
</evidence>
<evidence type="ECO:0000256" key="2">
    <source>
        <dbReference type="SAM" id="MobiDB-lite"/>
    </source>
</evidence>
<name>MQO_XYLFA</name>
<sequence length="562" mass="62707">MKKSLKDLTGLIVAFALATLLFLYWPLYQRSVPKANNDTPVDVVLIGGGIMSVTLGTYLQELQPDWKIELFERLNGIAQESSDGWNNAGTGHSAFAELNYTPELQDGTIEIKRAIKIAEQFEISREFWSHQVRHGRLPAPTEFINATPHMSFVWGEDRIEYLRKRHNALIKNPLFYGMQFSTDPAVIQQWAPLLMEGRTQDQKIAATYMPLGTDVNFGVITRDLAKHLQYSQNFALHLDHEVTALRQNPDKTWNVTVKNLNNGQERSIKSRFVFIGAGGAALKLLQLSGIPESKDYAGFPVGGQFLSFENTAITKRHNVKAYGMAESGSPPMSVPHLDARKLDGKSIVLFGPFALYSTKFLKKGSWFDLYSSVNHHNAAGMLSVGKNNIDLVKYLMKQATLTDADRHAELLKYFPNAKPTDWTLVTAGQRVQIIKRDPEKGMILQFGTEIVMDKDHTLATLLGASPGASTSPSIMLDLLAKAFPQQMKNGWETQLKKIIPSYGQHINDSPALTNKIRRMTSETLSLPYLEVPDKSATPPDPTIAPKHQHSPTHNANSEMQAL</sequence>
<feature type="chain" id="PRO_0000128760" description="Probable malate:quinone oxidoreductase">
    <location>
        <begin position="1"/>
        <end position="562"/>
    </location>
</feature>
<feature type="region of interest" description="Disordered" evidence="2">
    <location>
        <begin position="530"/>
        <end position="562"/>
    </location>
</feature>
<feature type="compositionally biased region" description="Polar residues" evidence="2">
    <location>
        <begin position="551"/>
        <end position="562"/>
    </location>
</feature>
<comment type="catalytic activity">
    <reaction evidence="1">
        <text>(S)-malate + a quinone = a quinol + oxaloacetate</text>
        <dbReference type="Rhea" id="RHEA:46012"/>
        <dbReference type="ChEBI" id="CHEBI:15589"/>
        <dbReference type="ChEBI" id="CHEBI:16452"/>
        <dbReference type="ChEBI" id="CHEBI:24646"/>
        <dbReference type="ChEBI" id="CHEBI:132124"/>
        <dbReference type="EC" id="1.1.5.4"/>
    </reaction>
</comment>
<comment type="cofactor">
    <cofactor evidence="1">
        <name>FAD</name>
        <dbReference type="ChEBI" id="CHEBI:57692"/>
    </cofactor>
</comment>
<comment type="pathway">
    <text evidence="1">Carbohydrate metabolism; tricarboxylic acid cycle; oxaloacetate from (S)-malate (quinone route): step 1/1.</text>
</comment>
<comment type="similarity">
    <text evidence="1">Belongs to the MQO family.</text>
</comment>
<dbReference type="EC" id="1.1.5.4" evidence="1"/>
<dbReference type="EMBL" id="AE003849">
    <property type="protein sequence ID" value="AAF83752.1"/>
    <property type="molecule type" value="Genomic_DNA"/>
</dbReference>
<dbReference type="PIR" id="A82743">
    <property type="entry name" value="A82743"/>
</dbReference>
<dbReference type="RefSeq" id="WP_010893461.1">
    <property type="nucleotide sequence ID" value="NC_002488.3"/>
</dbReference>
<dbReference type="SMR" id="Q9PET6"/>
<dbReference type="STRING" id="160492.XF_0942"/>
<dbReference type="KEGG" id="xfa:XF_0942"/>
<dbReference type="eggNOG" id="COG0579">
    <property type="taxonomic scope" value="Bacteria"/>
</dbReference>
<dbReference type="HOGENOM" id="CLU_028151_0_0_6"/>
<dbReference type="UniPathway" id="UPA00223">
    <property type="reaction ID" value="UER01008"/>
</dbReference>
<dbReference type="Proteomes" id="UP000000812">
    <property type="component" value="Chromosome"/>
</dbReference>
<dbReference type="GO" id="GO:0047545">
    <property type="term" value="F:2-hydroxyglutarate dehydrogenase activity"/>
    <property type="evidence" value="ECO:0007669"/>
    <property type="project" value="TreeGrafter"/>
</dbReference>
<dbReference type="GO" id="GO:0008924">
    <property type="term" value="F:L-malate dehydrogenase (quinone) activity"/>
    <property type="evidence" value="ECO:0007669"/>
    <property type="project" value="UniProtKB-UniRule"/>
</dbReference>
<dbReference type="GO" id="GO:0006099">
    <property type="term" value="P:tricarboxylic acid cycle"/>
    <property type="evidence" value="ECO:0007669"/>
    <property type="project" value="UniProtKB-UniRule"/>
</dbReference>
<dbReference type="Gene3D" id="3.30.9.10">
    <property type="entry name" value="D-Amino Acid Oxidase, subunit A, domain 2"/>
    <property type="match status" value="1"/>
</dbReference>
<dbReference type="Gene3D" id="3.50.50.60">
    <property type="entry name" value="FAD/NAD(P)-binding domain"/>
    <property type="match status" value="1"/>
</dbReference>
<dbReference type="HAMAP" id="MF_00212">
    <property type="entry name" value="MQO"/>
    <property type="match status" value="1"/>
</dbReference>
<dbReference type="InterPro" id="IPR036188">
    <property type="entry name" value="FAD/NAD-bd_sf"/>
</dbReference>
<dbReference type="InterPro" id="IPR006231">
    <property type="entry name" value="MQO"/>
</dbReference>
<dbReference type="NCBIfam" id="TIGR01320">
    <property type="entry name" value="mal_quin_oxido"/>
    <property type="match status" value="1"/>
</dbReference>
<dbReference type="NCBIfam" id="NF003603">
    <property type="entry name" value="PRK05257.1-1"/>
    <property type="match status" value="1"/>
</dbReference>
<dbReference type="NCBIfam" id="NF003605">
    <property type="entry name" value="PRK05257.1-4"/>
    <property type="match status" value="1"/>
</dbReference>
<dbReference type="NCBIfam" id="NF003606">
    <property type="entry name" value="PRK05257.2-1"/>
    <property type="match status" value="1"/>
</dbReference>
<dbReference type="NCBIfam" id="NF003611">
    <property type="entry name" value="PRK05257.3-2"/>
    <property type="match status" value="1"/>
</dbReference>
<dbReference type="NCBIfam" id="NF009875">
    <property type="entry name" value="PRK13339.1"/>
    <property type="match status" value="1"/>
</dbReference>
<dbReference type="PANTHER" id="PTHR43104">
    <property type="entry name" value="L-2-HYDROXYGLUTARATE DEHYDROGENASE, MITOCHONDRIAL"/>
    <property type="match status" value="1"/>
</dbReference>
<dbReference type="PANTHER" id="PTHR43104:SF2">
    <property type="entry name" value="L-2-HYDROXYGLUTARATE DEHYDROGENASE, MITOCHONDRIAL"/>
    <property type="match status" value="1"/>
</dbReference>
<dbReference type="Pfam" id="PF06039">
    <property type="entry name" value="Mqo"/>
    <property type="match status" value="1"/>
</dbReference>
<dbReference type="SUPFAM" id="SSF51905">
    <property type="entry name" value="FAD/NAD(P)-binding domain"/>
    <property type="match status" value="1"/>
</dbReference>
<reference key="1">
    <citation type="journal article" date="2000" name="Nature">
        <title>The genome sequence of the plant pathogen Xylella fastidiosa.</title>
        <authorList>
            <person name="Simpson A.J.G."/>
            <person name="Reinach F.C."/>
            <person name="Arruda P."/>
            <person name="Abreu F.A."/>
            <person name="Acencio M."/>
            <person name="Alvarenga R."/>
            <person name="Alves L.M.C."/>
            <person name="Araya J.E."/>
            <person name="Baia G.S."/>
            <person name="Baptista C.S."/>
            <person name="Barros M.H."/>
            <person name="Bonaccorsi E.D."/>
            <person name="Bordin S."/>
            <person name="Bove J.M."/>
            <person name="Briones M.R.S."/>
            <person name="Bueno M.R.P."/>
            <person name="Camargo A.A."/>
            <person name="Camargo L.E.A."/>
            <person name="Carraro D.M."/>
            <person name="Carrer H."/>
            <person name="Colauto N.B."/>
            <person name="Colombo C."/>
            <person name="Costa F.F."/>
            <person name="Costa M.C.R."/>
            <person name="Costa-Neto C.M."/>
            <person name="Coutinho L.L."/>
            <person name="Cristofani M."/>
            <person name="Dias-Neto E."/>
            <person name="Docena C."/>
            <person name="El-Dorry H."/>
            <person name="Facincani A.P."/>
            <person name="Ferreira A.J.S."/>
            <person name="Ferreira V.C.A."/>
            <person name="Ferro J.A."/>
            <person name="Fraga J.S."/>
            <person name="Franca S.C."/>
            <person name="Franco M.C."/>
            <person name="Frohme M."/>
            <person name="Furlan L.R."/>
            <person name="Garnier M."/>
            <person name="Goldman G.H."/>
            <person name="Goldman M.H.S."/>
            <person name="Gomes S.L."/>
            <person name="Gruber A."/>
            <person name="Ho P.L."/>
            <person name="Hoheisel J.D."/>
            <person name="Junqueira M.L."/>
            <person name="Kemper E.L."/>
            <person name="Kitajima J.P."/>
            <person name="Krieger J.E."/>
            <person name="Kuramae E.E."/>
            <person name="Laigret F."/>
            <person name="Lambais M.R."/>
            <person name="Leite L.C.C."/>
            <person name="Lemos E.G.M."/>
            <person name="Lemos M.V.F."/>
            <person name="Lopes S.A."/>
            <person name="Lopes C.R."/>
            <person name="Machado J.A."/>
            <person name="Machado M.A."/>
            <person name="Madeira A.M.B.N."/>
            <person name="Madeira H.M.F."/>
            <person name="Marino C.L."/>
            <person name="Marques M.V."/>
            <person name="Martins E.A.L."/>
            <person name="Martins E.M.F."/>
            <person name="Matsukuma A.Y."/>
            <person name="Menck C.F.M."/>
            <person name="Miracca E.C."/>
            <person name="Miyaki C.Y."/>
            <person name="Monteiro-Vitorello C.B."/>
            <person name="Moon D.H."/>
            <person name="Nagai M.A."/>
            <person name="Nascimento A.L.T.O."/>
            <person name="Netto L.E.S."/>
            <person name="Nhani A. Jr."/>
            <person name="Nobrega F.G."/>
            <person name="Nunes L.R."/>
            <person name="Oliveira M.A."/>
            <person name="de Oliveira M.C."/>
            <person name="de Oliveira R.C."/>
            <person name="Palmieri D.A."/>
            <person name="Paris A."/>
            <person name="Peixoto B.R."/>
            <person name="Pereira G.A.G."/>
            <person name="Pereira H.A. Jr."/>
            <person name="Pesquero J.B."/>
            <person name="Quaggio R.B."/>
            <person name="Roberto P.G."/>
            <person name="Rodrigues V."/>
            <person name="de Rosa A.J.M."/>
            <person name="de Rosa V.E. Jr."/>
            <person name="de Sa R.G."/>
            <person name="Santelli R.V."/>
            <person name="Sawasaki H.E."/>
            <person name="da Silva A.C.R."/>
            <person name="da Silva A.M."/>
            <person name="da Silva F.R."/>
            <person name="Silva W.A. Jr."/>
            <person name="da Silveira J.F."/>
            <person name="Silvestri M.L.Z."/>
            <person name="Siqueira W.J."/>
            <person name="de Souza A.A."/>
            <person name="de Souza A.P."/>
            <person name="Terenzi M.F."/>
            <person name="Truffi D."/>
            <person name="Tsai S.M."/>
            <person name="Tsuhako M.H."/>
            <person name="Vallada H."/>
            <person name="Van Sluys M.A."/>
            <person name="Verjovski-Almeida S."/>
            <person name="Vettore A.L."/>
            <person name="Zago M.A."/>
            <person name="Zatz M."/>
            <person name="Meidanis J."/>
            <person name="Setubal J.C."/>
        </authorList>
    </citation>
    <scope>NUCLEOTIDE SEQUENCE [LARGE SCALE GENOMIC DNA]</scope>
    <source>
        <strain>9a5c</strain>
    </source>
</reference>
<organism>
    <name type="scientific">Xylella fastidiosa (strain 9a5c)</name>
    <dbReference type="NCBI Taxonomy" id="160492"/>
    <lineage>
        <taxon>Bacteria</taxon>
        <taxon>Pseudomonadati</taxon>
        <taxon>Pseudomonadota</taxon>
        <taxon>Gammaproteobacteria</taxon>
        <taxon>Lysobacterales</taxon>
        <taxon>Lysobacteraceae</taxon>
        <taxon>Xylella</taxon>
    </lineage>
</organism>
<protein>
    <recommendedName>
        <fullName evidence="1">Probable malate:quinone oxidoreductase</fullName>
        <ecNumber evidence="1">1.1.5.4</ecNumber>
    </recommendedName>
    <alternativeName>
        <fullName evidence="1">MQO</fullName>
    </alternativeName>
    <alternativeName>
        <fullName evidence="1">Malate dehydrogenase [quinone]</fullName>
    </alternativeName>
</protein>
<keyword id="KW-0274">FAD</keyword>
<keyword id="KW-0285">Flavoprotein</keyword>
<keyword id="KW-0560">Oxidoreductase</keyword>
<keyword id="KW-0816">Tricarboxylic acid cycle</keyword>
<gene>
    <name evidence="1" type="primary">mqo</name>
    <name type="ordered locus">XF_0942</name>
</gene>
<accession>Q9PET6</accession>